<name>DBP7_KLULA</name>
<evidence type="ECO:0000250" key="1"/>
<evidence type="ECO:0000255" key="2">
    <source>
        <dbReference type="PROSITE-ProRule" id="PRU00541"/>
    </source>
</evidence>
<evidence type="ECO:0000255" key="3">
    <source>
        <dbReference type="PROSITE-ProRule" id="PRU00542"/>
    </source>
</evidence>
<evidence type="ECO:0000256" key="4">
    <source>
        <dbReference type="SAM" id="MobiDB-lite"/>
    </source>
</evidence>
<evidence type="ECO:0000305" key="5"/>
<reference key="1">
    <citation type="journal article" date="2004" name="Nature">
        <title>Genome evolution in yeasts.</title>
        <authorList>
            <person name="Dujon B."/>
            <person name="Sherman D."/>
            <person name="Fischer G."/>
            <person name="Durrens P."/>
            <person name="Casaregola S."/>
            <person name="Lafontaine I."/>
            <person name="de Montigny J."/>
            <person name="Marck C."/>
            <person name="Neuveglise C."/>
            <person name="Talla E."/>
            <person name="Goffard N."/>
            <person name="Frangeul L."/>
            <person name="Aigle M."/>
            <person name="Anthouard V."/>
            <person name="Babour A."/>
            <person name="Barbe V."/>
            <person name="Barnay S."/>
            <person name="Blanchin S."/>
            <person name="Beckerich J.-M."/>
            <person name="Beyne E."/>
            <person name="Bleykasten C."/>
            <person name="Boisrame A."/>
            <person name="Boyer J."/>
            <person name="Cattolico L."/>
            <person name="Confanioleri F."/>
            <person name="de Daruvar A."/>
            <person name="Despons L."/>
            <person name="Fabre E."/>
            <person name="Fairhead C."/>
            <person name="Ferry-Dumazet H."/>
            <person name="Groppi A."/>
            <person name="Hantraye F."/>
            <person name="Hennequin C."/>
            <person name="Jauniaux N."/>
            <person name="Joyet P."/>
            <person name="Kachouri R."/>
            <person name="Kerrest A."/>
            <person name="Koszul R."/>
            <person name="Lemaire M."/>
            <person name="Lesur I."/>
            <person name="Ma L."/>
            <person name="Muller H."/>
            <person name="Nicaud J.-M."/>
            <person name="Nikolski M."/>
            <person name="Oztas S."/>
            <person name="Ozier-Kalogeropoulos O."/>
            <person name="Pellenz S."/>
            <person name="Potier S."/>
            <person name="Richard G.-F."/>
            <person name="Straub M.-L."/>
            <person name="Suleau A."/>
            <person name="Swennen D."/>
            <person name="Tekaia F."/>
            <person name="Wesolowski-Louvel M."/>
            <person name="Westhof E."/>
            <person name="Wirth B."/>
            <person name="Zeniou-Meyer M."/>
            <person name="Zivanovic Y."/>
            <person name="Bolotin-Fukuhara M."/>
            <person name="Thierry A."/>
            <person name="Bouchier C."/>
            <person name="Caudron B."/>
            <person name="Scarpelli C."/>
            <person name="Gaillardin C."/>
            <person name="Weissenbach J."/>
            <person name="Wincker P."/>
            <person name="Souciet J.-L."/>
        </authorList>
    </citation>
    <scope>NUCLEOTIDE SEQUENCE [LARGE SCALE GENOMIC DNA]</scope>
    <source>
        <strain>ATCC 8585 / CBS 2359 / DSM 70799 / NBRC 1267 / NRRL Y-1140 / WM37</strain>
    </source>
</reference>
<sequence>MSFNDDDDGMLLNFTTDVSDASETVSRGKITGGKWKDRRKAKMMMEGRKPRVRGEKRPLESDGAPTFEELEASSSNSTSAQAPVEPKRSRFDNSSNVEQPARVTQPLQLNSQIVSSLFTSSRNIDTVTNSNAHDEKAEVTYSNAPLVGDTFDSFGITDTMVSHLNVKMKISKPTKIQKLVIPPFLQAQNDLFIHAQTGSGKTLAFLLPIFQSILSLGQNITRQSGCFALVVTPTRELANQIYQVTSELAQCCHFLVPCLLIGGERKKSEKARLRKGANFIIGTPGRVLDHLQNTKVIKEQLAPSLRYVVLDEGDKLMELGFEETLKEILNIIHGIDIDTHQFPKLPKRILHVLCSATVKGNVTKLGNVTLQNYKLISSGQKQTETTTVPDQLLQKIVIVPPKLRLVTLAGSLTTITQKHYKEGSKSDVTRTIVFLSCSDSVDFHYEVFSSHDGNHRGLVGDTARLLTKGNSILPCFNDTDDPNVICYKLHGSLSQQTRTATLKHFATNNDATKGKHLILFCTDVASRGLDLPHVSTVIEMDPPFAVEDHLHRIGRTARAGCEGESLLFLLPGEEEGYMDYIKPYHPKGWKLLTYDEQVLRPAFEGLNVRRTDKKKEDWDKHEAQAWDNNATTWHLNVERRVIEDSHFKELAVKGYMSHIRAYATHLSIEKKFFNLKCLHLGHLAKSFALRERPKSMGLQQGKAGAAAAASQKKPKEDSKSKMLRMAKMAMRQSNDEFNFA</sequence>
<keyword id="KW-0067">ATP-binding</keyword>
<keyword id="KW-0347">Helicase</keyword>
<keyword id="KW-0378">Hydrolase</keyword>
<keyword id="KW-0547">Nucleotide-binding</keyword>
<keyword id="KW-0539">Nucleus</keyword>
<keyword id="KW-1185">Reference proteome</keyword>
<keyword id="KW-0690">Ribosome biogenesis</keyword>
<keyword id="KW-0694">RNA-binding</keyword>
<keyword id="KW-0698">rRNA processing</keyword>
<proteinExistence type="inferred from homology"/>
<dbReference type="EC" id="3.6.4.13"/>
<dbReference type="EMBL" id="CR382126">
    <property type="protein sequence ID" value="CAG98415.1"/>
    <property type="molecule type" value="Genomic_DNA"/>
</dbReference>
<dbReference type="RefSeq" id="XP_455707.1">
    <property type="nucleotide sequence ID" value="XM_455707.1"/>
</dbReference>
<dbReference type="SMR" id="Q6CK32"/>
<dbReference type="FunCoup" id="Q6CK32">
    <property type="interactions" value="843"/>
</dbReference>
<dbReference type="STRING" id="284590.Q6CK32"/>
<dbReference type="PaxDb" id="284590-Q6CK32"/>
<dbReference type="KEGG" id="kla:KLLA0_F13926g"/>
<dbReference type="eggNOG" id="KOG0348">
    <property type="taxonomic scope" value="Eukaryota"/>
</dbReference>
<dbReference type="HOGENOM" id="CLU_003041_26_2_1"/>
<dbReference type="InParanoid" id="Q6CK32"/>
<dbReference type="OMA" id="AVHIKAD"/>
<dbReference type="Proteomes" id="UP000000598">
    <property type="component" value="Chromosome F"/>
</dbReference>
<dbReference type="GO" id="GO:0005730">
    <property type="term" value="C:nucleolus"/>
    <property type="evidence" value="ECO:0007669"/>
    <property type="project" value="UniProtKB-SubCell"/>
</dbReference>
<dbReference type="GO" id="GO:0005524">
    <property type="term" value="F:ATP binding"/>
    <property type="evidence" value="ECO:0007669"/>
    <property type="project" value="UniProtKB-KW"/>
</dbReference>
<dbReference type="GO" id="GO:0016887">
    <property type="term" value="F:ATP hydrolysis activity"/>
    <property type="evidence" value="ECO:0007669"/>
    <property type="project" value="RHEA"/>
</dbReference>
<dbReference type="GO" id="GO:0003723">
    <property type="term" value="F:RNA binding"/>
    <property type="evidence" value="ECO:0007669"/>
    <property type="project" value="UniProtKB-KW"/>
</dbReference>
<dbReference type="GO" id="GO:0003724">
    <property type="term" value="F:RNA helicase activity"/>
    <property type="evidence" value="ECO:0007669"/>
    <property type="project" value="UniProtKB-EC"/>
</dbReference>
<dbReference type="GO" id="GO:0006364">
    <property type="term" value="P:rRNA processing"/>
    <property type="evidence" value="ECO:0007669"/>
    <property type="project" value="UniProtKB-KW"/>
</dbReference>
<dbReference type="CDD" id="cd17949">
    <property type="entry name" value="DEADc_DDX31"/>
    <property type="match status" value="1"/>
</dbReference>
<dbReference type="CDD" id="cd18787">
    <property type="entry name" value="SF2_C_DEAD"/>
    <property type="match status" value="1"/>
</dbReference>
<dbReference type="FunFam" id="3.40.50.300:FF:002326">
    <property type="entry name" value="ATP-dependent RNA helicase DBP7"/>
    <property type="match status" value="1"/>
</dbReference>
<dbReference type="Gene3D" id="3.40.50.300">
    <property type="entry name" value="P-loop containing nucleotide triphosphate hydrolases"/>
    <property type="match status" value="2"/>
</dbReference>
<dbReference type="InterPro" id="IPR011545">
    <property type="entry name" value="DEAD/DEAH_box_helicase_dom"/>
</dbReference>
<dbReference type="InterPro" id="IPR014001">
    <property type="entry name" value="Helicase_ATP-bd"/>
</dbReference>
<dbReference type="InterPro" id="IPR001650">
    <property type="entry name" value="Helicase_C-like"/>
</dbReference>
<dbReference type="InterPro" id="IPR027417">
    <property type="entry name" value="P-loop_NTPase"/>
</dbReference>
<dbReference type="InterPro" id="IPR014014">
    <property type="entry name" value="RNA_helicase_DEAD_Q_motif"/>
</dbReference>
<dbReference type="InterPro" id="IPR025313">
    <property type="entry name" value="SPB4-like_CTE"/>
</dbReference>
<dbReference type="PANTHER" id="PTHR24031">
    <property type="entry name" value="RNA HELICASE"/>
    <property type="match status" value="1"/>
</dbReference>
<dbReference type="Pfam" id="PF13959">
    <property type="entry name" value="CTE_SPB4"/>
    <property type="match status" value="1"/>
</dbReference>
<dbReference type="Pfam" id="PF00270">
    <property type="entry name" value="DEAD"/>
    <property type="match status" value="1"/>
</dbReference>
<dbReference type="Pfam" id="PF00271">
    <property type="entry name" value="Helicase_C"/>
    <property type="match status" value="1"/>
</dbReference>
<dbReference type="SMART" id="SM00487">
    <property type="entry name" value="DEXDc"/>
    <property type="match status" value="1"/>
</dbReference>
<dbReference type="SMART" id="SM01178">
    <property type="entry name" value="DUF4217"/>
    <property type="match status" value="1"/>
</dbReference>
<dbReference type="SMART" id="SM00490">
    <property type="entry name" value="HELICc"/>
    <property type="match status" value="1"/>
</dbReference>
<dbReference type="SUPFAM" id="SSF52540">
    <property type="entry name" value="P-loop containing nucleoside triphosphate hydrolases"/>
    <property type="match status" value="2"/>
</dbReference>
<dbReference type="PROSITE" id="PS51192">
    <property type="entry name" value="HELICASE_ATP_BIND_1"/>
    <property type="match status" value="1"/>
</dbReference>
<dbReference type="PROSITE" id="PS51194">
    <property type="entry name" value="HELICASE_CTER"/>
    <property type="match status" value="1"/>
</dbReference>
<dbReference type="PROSITE" id="PS51195">
    <property type="entry name" value="Q_MOTIF"/>
    <property type="match status" value="1"/>
</dbReference>
<protein>
    <recommendedName>
        <fullName>ATP-dependent RNA helicase DBP7</fullName>
        <ecNumber>3.6.4.13</ecNumber>
    </recommendedName>
</protein>
<comment type="function">
    <text evidence="1">ATP-binding RNA helicase involved in the biogenesis of 60S ribosomal subunits and is required for the normal formation of 25S and 5.8S rRNAs.</text>
</comment>
<comment type="catalytic activity">
    <reaction>
        <text>ATP + H2O = ADP + phosphate + H(+)</text>
        <dbReference type="Rhea" id="RHEA:13065"/>
        <dbReference type="ChEBI" id="CHEBI:15377"/>
        <dbReference type="ChEBI" id="CHEBI:15378"/>
        <dbReference type="ChEBI" id="CHEBI:30616"/>
        <dbReference type="ChEBI" id="CHEBI:43474"/>
        <dbReference type="ChEBI" id="CHEBI:456216"/>
        <dbReference type="EC" id="3.6.4.13"/>
    </reaction>
</comment>
<comment type="subcellular location">
    <subcellularLocation>
        <location evidence="1">Nucleus</location>
        <location evidence="1">Nucleolus</location>
    </subcellularLocation>
</comment>
<comment type="domain">
    <text>The Q motif is unique to and characteristic of the DEAD box family of RNA helicases and controls ATP binding and hydrolysis.</text>
</comment>
<comment type="miscellaneous">
    <text>Present with 1460 molecules/cell in log phase SD medium.</text>
</comment>
<comment type="similarity">
    <text evidence="5">Belongs to the DEAD box helicase family. DDX31/DBP7 subfamily.</text>
</comment>
<feature type="chain" id="PRO_0000232257" description="ATP-dependent RNA helicase DBP7">
    <location>
        <begin position="1"/>
        <end position="740"/>
    </location>
</feature>
<feature type="domain" description="Helicase ATP-binding" evidence="2">
    <location>
        <begin position="182"/>
        <end position="376"/>
    </location>
</feature>
<feature type="domain" description="Helicase C-terminal" evidence="3">
    <location>
        <begin position="414"/>
        <end position="607"/>
    </location>
</feature>
<feature type="region of interest" description="Disordered" evidence="4">
    <location>
        <begin position="1"/>
        <end position="104"/>
    </location>
</feature>
<feature type="region of interest" description="Disordered" evidence="4">
    <location>
        <begin position="695"/>
        <end position="721"/>
    </location>
</feature>
<feature type="short sequence motif" description="Q motif">
    <location>
        <begin position="149"/>
        <end position="178"/>
    </location>
</feature>
<feature type="short sequence motif" description="DEAD box">
    <location>
        <begin position="311"/>
        <end position="314"/>
    </location>
</feature>
<feature type="compositionally biased region" description="Polar residues" evidence="4">
    <location>
        <begin position="13"/>
        <end position="25"/>
    </location>
</feature>
<feature type="compositionally biased region" description="Basic and acidic residues" evidence="4">
    <location>
        <begin position="43"/>
        <end position="60"/>
    </location>
</feature>
<feature type="compositionally biased region" description="Polar residues" evidence="4">
    <location>
        <begin position="72"/>
        <end position="81"/>
    </location>
</feature>
<feature type="compositionally biased region" description="Low complexity" evidence="4">
    <location>
        <begin position="697"/>
        <end position="711"/>
    </location>
</feature>
<feature type="binding site" evidence="2">
    <location>
        <begin position="195"/>
        <end position="202"/>
    </location>
    <ligand>
        <name>ATP</name>
        <dbReference type="ChEBI" id="CHEBI:30616"/>
    </ligand>
</feature>
<organism>
    <name type="scientific">Kluyveromyces lactis (strain ATCC 8585 / CBS 2359 / DSM 70799 / NBRC 1267 / NRRL Y-1140 / WM37)</name>
    <name type="common">Yeast</name>
    <name type="synonym">Candida sphaerica</name>
    <dbReference type="NCBI Taxonomy" id="284590"/>
    <lineage>
        <taxon>Eukaryota</taxon>
        <taxon>Fungi</taxon>
        <taxon>Dikarya</taxon>
        <taxon>Ascomycota</taxon>
        <taxon>Saccharomycotina</taxon>
        <taxon>Saccharomycetes</taxon>
        <taxon>Saccharomycetales</taxon>
        <taxon>Saccharomycetaceae</taxon>
        <taxon>Kluyveromyces</taxon>
    </lineage>
</organism>
<accession>Q6CK32</accession>
<gene>
    <name type="primary">DBP7</name>
    <name type="ordered locus">KLLA0F13926g</name>
</gene>